<gene>
    <name type="primary">Tbca</name>
</gene>
<reference key="1">
    <citation type="journal article" date="1994" name="J. Cell Biol.">
        <title>A novel cochaperonin that modulates the ATPase activity of cytoplasmic chaperonin.</title>
        <authorList>
            <person name="Gao Y."/>
            <person name="Melki R."/>
            <person name="Walden P.D."/>
            <person name="Lewis S.A."/>
            <person name="Ampe C."/>
            <person name="Rommelaere H."/>
            <person name="Vandekerckhove J."/>
            <person name="Cowan N.J."/>
        </authorList>
    </citation>
    <scope>NUCLEOTIDE SEQUENCE [MRNA]</scope>
    <source>
        <strain>Swiss Webster</strain>
        <tissue>Testis</tissue>
    </source>
</reference>
<reference key="2">
    <citation type="journal article" date="2004" name="Genome Res.">
        <title>The status, quality, and expansion of the NIH full-length cDNA project: the Mammalian Gene Collection (MGC).</title>
        <authorList>
            <consortium name="The MGC Project Team"/>
        </authorList>
    </citation>
    <scope>NUCLEOTIDE SEQUENCE [LARGE SCALE MRNA]</scope>
    <source>
        <strain>C57BL/6J</strain>
        <tissue>Brain</tissue>
        <tissue>Colon</tissue>
        <tissue>Mammary gland</tissue>
    </source>
</reference>
<reference key="3">
    <citation type="journal article" date="2010" name="Cell">
        <title>A tissue-specific atlas of mouse protein phosphorylation and expression.</title>
        <authorList>
            <person name="Huttlin E.L."/>
            <person name="Jedrychowski M.P."/>
            <person name="Elias J.E."/>
            <person name="Goswami T."/>
            <person name="Rad R."/>
            <person name="Beausoleil S.A."/>
            <person name="Villen J."/>
            <person name="Haas W."/>
            <person name="Sowa M.E."/>
            <person name="Gygi S.P."/>
        </authorList>
    </citation>
    <scope>IDENTIFICATION BY MASS SPECTROMETRY [LARGE SCALE ANALYSIS]</scope>
    <source>
        <tissue>Brain</tissue>
        <tissue>Brown adipose tissue</tissue>
        <tissue>Heart</tissue>
        <tissue>Kidney</tissue>
        <tissue>Liver</tissue>
        <tissue>Lung</tissue>
        <tissue>Pancreas</tissue>
        <tissue>Spleen</tissue>
        <tissue>Testis</tissue>
    </source>
</reference>
<organism>
    <name type="scientific">Mus musculus</name>
    <name type="common">Mouse</name>
    <dbReference type="NCBI Taxonomy" id="10090"/>
    <lineage>
        <taxon>Eukaryota</taxon>
        <taxon>Metazoa</taxon>
        <taxon>Chordata</taxon>
        <taxon>Craniata</taxon>
        <taxon>Vertebrata</taxon>
        <taxon>Euteleostomi</taxon>
        <taxon>Mammalia</taxon>
        <taxon>Eutheria</taxon>
        <taxon>Euarchontoglires</taxon>
        <taxon>Glires</taxon>
        <taxon>Rodentia</taxon>
        <taxon>Myomorpha</taxon>
        <taxon>Muroidea</taxon>
        <taxon>Muridae</taxon>
        <taxon>Murinae</taxon>
        <taxon>Mus</taxon>
        <taxon>Mus</taxon>
    </lineage>
</organism>
<sequence>MADPRVRQIKIKTGVVRRLVKERVMYEKEAKQQEEKIEKMKAEDGENYAIKKQAEILQESRMMIPDCQRRLEAAYTDLQQILESEKDLEEAEEYKEARVVLDSVKLEA</sequence>
<protein>
    <recommendedName>
        <fullName>Tubulin-specific chaperone A</fullName>
    </recommendedName>
    <alternativeName>
        <fullName>TCP1-chaperonin cofactor A</fullName>
    </alternativeName>
    <alternativeName>
        <fullName>Tubulin-folding cofactor A</fullName>
        <shortName>CFA</shortName>
    </alternativeName>
</protein>
<name>TBCA_MOUSE</name>
<keyword id="KW-0007">Acetylation</keyword>
<keyword id="KW-0143">Chaperone</keyword>
<keyword id="KW-0963">Cytoplasm</keyword>
<keyword id="KW-0206">Cytoskeleton</keyword>
<keyword id="KW-0493">Microtubule</keyword>
<keyword id="KW-1185">Reference proteome</keyword>
<comment type="function">
    <text>Tubulin-folding protein; involved in the early step of the tubulin folding pathway.</text>
</comment>
<comment type="subunit">
    <text>Supercomplex made of cofactors A to E. Cofactors A and D function by capturing and stabilizing tubulin in a quasi-native conformation. Cofactor E binds to the cofactor D-tubulin complex; interaction with cofactor C then causes the release of tubulin polypeptides that are committed to the native state.</text>
</comment>
<comment type="subcellular location">
    <subcellularLocation>
        <location>Cytoplasm</location>
        <location>Cytoskeleton</location>
    </subcellularLocation>
</comment>
<comment type="tissue specificity">
    <text>Widely expressed, but is most abundant in the testis.</text>
</comment>
<comment type="similarity">
    <text evidence="2">Belongs to the TBCA family.</text>
</comment>
<dbReference type="EMBL" id="U05333">
    <property type="protein sequence ID" value="AAA83250.1"/>
    <property type="molecule type" value="mRNA"/>
</dbReference>
<dbReference type="EMBL" id="BC034267">
    <property type="protein sequence ID" value="AAH34267.1"/>
    <property type="molecule type" value="mRNA"/>
</dbReference>
<dbReference type="EMBL" id="BC051475">
    <property type="protein sequence ID" value="AAH51475.1"/>
    <property type="molecule type" value="mRNA"/>
</dbReference>
<dbReference type="EMBL" id="BC055749">
    <property type="protein sequence ID" value="AAH55749.1"/>
    <property type="molecule type" value="mRNA"/>
</dbReference>
<dbReference type="CCDS" id="CCDS26694.1"/>
<dbReference type="PIR" id="I48930">
    <property type="entry name" value="I48930"/>
</dbReference>
<dbReference type="RefSeq" id="NP_033347.1">
    <property type="nucleotide sequence ID" value="NM_009321.3"/>
</dbReference>
<dbReference type="SMR" id="P48428"/>
<dbReference type="BioGRID" id="203976">
    <property type="interactions" value="1"/>
</dbReference>
<dbReference type="FunCoup" id="P48428">
    <property type="interactions" value="1875"/>
</dbReference>
<dbReference type="STRING" id="10090.ENSMUSP00000038781"/>
<dbReference type="GlyGen" id="P48428">
    <property type="glycosylation" value="1 site, 1 O-linked glycan (1 site)"/>
</dbReference>
<dbReference type="iPTMnet" id="P48428"/>
<dbReference type="PhosphoSitePlus" id="P48428"/>
<dbReference type="REPRODUCTION-2DPAGE" id="P48428"/>
<dbReference type="jPOST" id="P48428"/>
<dbReference type="PaxDb" id="10090-ENSMUSP00000038781"/>
<dbReference type="PeptideAtlas" id="P48428"/>
<dbReference type="ProteomicsDB" id="263010"/>
<dbReference type="Pumba" id="P48428"/>
<dbReference type="Antibodypedia" id="24499">
    <property type="antibodies" value="270 antibodies from 28 providers"/>
</dbReference>
<dbReference type="DNASU" id="21371"/>
<dbReference type="Ensembl" id="ENSMUST00000046644.7">
    <property type="protein sequence ID" value="ENSMUSP00000038781.6"/>
    <property type="gene ID" value="ENSMUSG00000042043.7"/>
</dbReference>
<dbReference type="GeneID" id="21371"/>
<dbReference type="KEGG" id="mmu:21371"/>
<dbReference type="UCSC" id="uc007rlx.1">
    <property type="organism name" value="mouse"/>
</dbReference>
<dbReference type="AGR" id="MGI:107549"/>
<dbReference type="CTD" id="6902"/>
<dbReference type="MGI" id="MGI:107549">
    <property type="gene designation" value="Tbca"/>
</dbReference>
<dbReference type="VEuPathDB" id="HostDB:ENSMUSG00000042043"/>
<dbReference type="eggNOG" id="KOG3470">
    <property type="taxonomic scope" value="Eukaryota"/>
</dbReference>
<dbReference type="GeneTree" id="ENSGT00390000009710"/>
<dbReference type="HOGENOM" id="CLU_130569_1_0_1"/>
<dbReference type="InParanoid" id="P48428"/>
<dbReference type="OMA" id="VIQECIM"/>
<dbReference type="OrthoDB" id="296187at2759"/>
<dbReference type="PhylomeDB" id="P48428"/>
<dbReference type="TreeFam" id="TF313971"/>
<dbReference type="BioGRID-ORCS" id="21371">
    <property type="hits" value="30 hits in 110 CRISPR screens"/>
</dbReference>
<dbReference type="ChiTaRS" id="Tbca">
    <property type="organism name" value="mouse"/>
</dbReference>
<dbReference type="PRO" id="PR:P48428"/>
<dbReference type="Proteomes" id="UP000000589">
    <property type="component" value="Chromosome 13"/>
</dbReference>
<dbReference type="RNAct" id="P48428">
    <property type="molecule type" value="protein"/>
</dbReference>
<dbReference type="Bgee" id="ENSMUSG00000042043">
    <property type="expression patterns" value="Expressed in floor plate of midbrain and 258 other cell types or tissues"/>
</dbReference>
<dbReference type="ExpressionAtlas" id="P48428">
    <property type="expression patterns" value="baseline and differential"/>
</dbReference>
<dbReference type="GO" id="GO:0005737">
    <property type="term" value="C:cytoplasm"/>
    <property type="evidence" value="ECO:0007669"/>
    <property type="project" value="UniProtKB-KW"/>
</dbReference>
<dbReference type="GO" id="GO:0005874">
    <property type="term" value="C:microtubule"/>
    <property type="evidence" value="ECO:0007669"/>
    <property type="project" value="UniProtKB-KW"/>
</dbReference>
<dbReference type="GO" id="GO:0005730">
    <property type="term" value="C:nucleolus"/>
    <property type="evidence" value="ECO:0007669"/>
    <property type="project" value="Ensembl"/>
</dbReference>
<dbReference type="GO" id="GO:0048487">
    <property type="term" value="F:beta-tubulin binding"/>
    <property type="evidence" value="ECO:0007669"/>
    <property type="project" value="InterPro"/>
</dbReference>
<dbReference type="GO" id="GO:0007023">
    <property type="term" value="P:post-chaperonin tubulin folding pathway"/>
    <property type="evidence" value="ECO:0007669"/>
    <property type="project" value="InterPro"/>
</dbReference>
<dbReference type="GO" id="GO:0007021">
    <property type="term" value="P:tubulin complex assembly"/>
    <property type="evidence" value="ECO:0007669"/>
    <property type="project" value="InterPro"/>
</dbReference>
<dbReference type="FunFam" id="1.20.58.90:FF:000009">
    <property type="entry name" value="Tubulin-specific chaperone A"/>
    <property type="match status" value="1"/>
</dbReference>
<dbReference type="Gene3D" id="1.20.58.90">
    <property type="match status" value="1"/>
</dbReference>
<dbReference type="InterPro" id="IPR004226">
    <property type="entry name" value="TBCA"/>
</dbReference>
<dbReference type="InterPro" id="IPR036126">
    <property type="entry name" value="TBCA_sf"/>
</dbReference>
<dbReference type="PANTHER" id="PTHR21500">
    <property type="entry name" value="TUBULIN-SPECIFIC CHAPERONE A"/>
    <property type="match status" value="1"/>
</dbReference>
<dbReference type="PANTHER" id="PTHR21500:SF0">
    <property type="entry name" value="TUBULIN-SPECIFIC CHAPERONE A"/>
    <property type="match status" value="1"/>
</dbReference>
<dbReference type="Pfam" id="PF02970">
    <property type="entry name" value="TBCA"/>
    <property type="match status" value="1"/>
</dbReference>
<dbReference type="SUPFAM" id="SSF46988">
    <property type="entry name" value="Tubulin chaperone cofactor A"/>
    <property type="match status" value="1"/>
</dbReference>
<accession>P48428</accession>
<feature type="initiator methionine" description="Removed" evidence="1">
    <location>
        <position position="1"/>
    </location>
</feature>
<feature type="chain" id="PRO_0000080040" description="Tubulin-specific chaperone A">
    <location>
        <begin position="2"/>
        <end position="108"/>
    </location>
</feature>
<feature type="modified residue" description="N-acetylalanine" evidence="1">
    <location>
        <position position="2"/>
    </location>
</feature>
<proteinExistence type="evidence at protein level"/>
<evidence type="ECO:0000250" key="1">
    <source>
        <dbReference type="UniProtKB" id="P80584"/>
    </source>
</evidence>
<evidence type="ECO:0000305" key="2"/>